<dbReference type="EC" id="2.1.3.15" evidence="1"/>
<dbReference type="EMBL" id="AP009510">
    <property type="protein sequence ID" value="BAG13975.1"/>
    <property type="molecule type" value="Genomic_DNA"/>
</dbReference>
<dbReference type="RefSeq" id="WP_015423500.1">
    <property type="nucleotide sequence ID" value="NC_020419.1"/>
</dbReference>
<dbReference type="SMR" id="B1H0E3"/>
<dbReference type="STRING" id="471821.TGRD_492"/>
<dbReference type="KEGG" id="rsd:TGRD_492"/>
<dbReference type="PATRIC" id="fig|471821.5.peg.794"/>
<dbReference type="HOGENOM" id="CLU_015486_1_1_0"/>
<dbReference type="UniPathway" id="UPA00655">
    <property type="reaction ID" value="UER00711"/>
</dbReference>
<dbReference type="Proteomes" id="UP000001691">
    <property type="component" value="Chromosome"/>
</dbReference>
<dbReference type="GO" id="GO:0009317">
    <property type="term" value="C:acetyl-CoA carboxylase complex"/>
    <property type="evidence" value="ECO:0007669"/>
    <property type="project" value="InterPro"/>
</dbReference>
<dbReference type="GO" id="GO:0003989">
    <property type="term" value="F:acetyl-CoA carboxylase activity"/>
    <property type="evidence" value="ECO:0007669"/>
    <property type="project" value="InterPro"/>
</dbReference>
<dbReference type="GO" id="GO:0005524">
    <property type="term" value="F:ATP binding"/>
    <property type="evidence" value="ECO:0007669"/>
    <property type="project" value="UniProtKB-KW"/>
</dbReference>
<dbReference type="GO" id="GO:0016743">
    <property type="term" value="F:carboxyl- or carbamoyltransferase activity"/>
    <property type="evidence" value="ECO:0007669"/>
    <property type="project" value="UniProtKB-UniRule"/>
</dbReference>
<dbReference type="GO" id="GO:0008270">
    <property type="term" value="F:zinc ion binding"/>
    <property type="evidence" value="ECO:0007669"/>
    <property type="project" value="UniProtKB-UniRule"/>
</dbReference>
<dbReference type="GO" id="GO:0006633">
    <property type="term" value="P:fatty acid biosynthetic process"/>
    <property type="evidence" value="ECO:0007669"/>
    <property type="project" value="UniProtKB-KW"/>
</dbReference>
<dbReference type="GO" id="GO:2001295">
    <property type="term" value="P:malonyl-CoA biosynthetic process"/>
    <property type="evidence" value="ECO:0007669"/>
    <property type="project" value="UniProtKB-UniRule"/>
</dbReference>
<dbReference type="Gene3D" id="3.90.226.10">
    <property type="entry name" value="2-enoyl-CoA Hydratase, Chain A, domain 1"/>
    <property type="match status" value="1"/>
</dbReference>
<dbReference type="HAMAP" id="MF_01395">
    <property type="entry name" value="AcetylCoA_CT_beta"/>
    <property type="match status" value="1"/>
</dbReference>
<dbReference type="InterPro" id="IPR034733">
    <property type="entry name" value="AcCoA_carboxyl_beta"/>
</dbReference>
<dbReference type="InterPro" id="IPR000438">
    <property type="entry name" value="Acetyl_CoA_COase_Trfase_b_su"/>
</dbReference>
<dbReference type="InterPro" id="IPR029045">
    <property type="entry name" value="ClpP/crotonase-like_dom_sf"/>
</dbReference>
<dbReference type="InterPro" id="IPR011762">
    <property type="entry name" value="COA_CT_N"/>
</dbReference>
<dbReference type="InterPro" id="IPR041010">
    <property type="entry name" value="Znf-ACC"/>
</dbReference>
<dbReference type="NCBIfam" id="TIGR00515">
    <property type="entry name" value="accD"/>
    <property type="match status" value="1"/>
</dbReference>
<dbReference type="PANTHER" id="PTHR42995">
    <property type="entry name" value="ACETYL-COENZYME A CARBOXYLASE CARBOXYL TRANSFERASE SUBUNIT BETA, CHLOROPLASTIC"/>
    <property type="match status" value="1"/>
</dbReference>
<dbReference type="PANTHER" id="PTHR42995:SF5">
    <property type="entry name" value="ACETYL-COENZYME A CARBOXYLASE CARBOXYL TRANSFERASE SUBUNIT BETA, CHLOROPLASTIC"/>
    <property type="match status" value="1"/>
</dbReference>
<dbReference type="Pfam" id="PF01039">
    <property type="entry name" value="Carboxyl_trans"/>
    <property type="match status" value="1"/>
</dbReference>
<dbReference type="Pfam" id="PF17848">
    <property type="entry name" value="Zn_ribbon_ACC"/>
    <property type="match status" value="1"/>
</dbReference>
<dbReference type="PRINTS" id="PR01070">
    <property type="entry name" value="ACCCTRFRASEB"/>
</dbReference>
<dbReference type="SUPFAM" id="SSF52096">
    <property type="entry name" value="ClpP/crotonase"/>
    <property type="match status" value="1"/>
</dbReference>
<dbReference type="PROSITE" id="PS50980">
    <property type="entry name" value="COA_CT_NTER"/>
    <property type="match status" value="1"/>
</dbReference>
<gene>
    <name evidence="1" type="primary">accD</name>
    <name type="ordered locus">TGRD_492</name>
</gene>
<organism>
    <name type="scientific">Endomicrobium trichonymphae</name>
    <dbReference type="NCBI Taxonomy" id="1408204"/>
    <lineage>
        <taxon>Bacteria</taxon>
        <taxon>Pseudomonadati</taxon>
        <taxon>Elusimicrobiota</taxon>
        <taxon>Endomicrobiia</taxon>
        <taxon>Endomicrobiales</taxon>
        <taxon>Endomicrobiaceae</taxon>
        <taxon>Candidatus Endomicrobiellum</taxon>
    </lineage>
</organism>
<sequence>MKMTIDNISEKKGVPEGIWTKCKKCDYILLQKDFEENLMVCPKCGYCTRLSARKRIEFTVDKGSFKEMDEAIQPVNFLCFPGYSDKIKKSEMSDAVVTGEAKINGYSVVIAVMDFEFMGGSMGSVVGEKIVRAIEKALKKKRHVIIISASGGARMQEGTISLMQMGKTSAALAKLADNRLAFISILTDPTTGGVAASYAMLGDINIAEPKALIGFAGPRVIEQTIRQQLSEEFQRSEFLEKHGMVDIVVERKNIRDVLTKALTFFYNRQCFLKF</sequence>
<keyword id="KW-0067">ATP-binding</keyword>
<keyword id="KW-0963">Cytoplasm</keyword>
<keyword id="KW-0275">Fatty acid biosynthesis</keyword>
<keyword id="KW-0276">Fatty acid metabolism</keyword>
<keyword id="KW-0444">Lipid biosynthesis</keyword>
<keyword id="KW-0443">Lipid metabolism</keyword>
<keyword id="KW-0479">Metal-binding</keyword>
<keyword id="KW-0547">Nucleotide-binding</keyword>
<keyword id="KW-0808">Transferase</keyword>
<keyword id="KW-0862">Zinc</keyword>
<keyword id="KW-0863">Zinc-finger</keyword>
<protein>
    <recommendedName>
        <fullName evidence="1">Acetyl-coenzyme A carboxylase carboxyl transferase subunit beta</fullName>
        <shortName evidence="1">ACCase subunit beta</shortName>
        <shortName evidence="1">Acetyl-CoA carboxylase carboxyltransferase subunit beta</shortName>
        <ecNumber evidence="1">2.1.3.15</ecNumber>
    </recommendedName>
</protein>
<comment type="function">
    <text evidence="1">Component of the acetyl coenzyme A carboxylase (ACC) complex. Biotin carboxylase (BC) catalyzes the carboxylation of biotin on its carrier protein (BCCP) and then the CO(2) group is transferred by the transcarboxylase to acetyl-CoA to form malonyl-CoA.</text>
</comment>
<comment type="catalytic activity">
    <reaction evidence="1">
        <text>N(6)-carboxybiotinyl-L-lysyl-[protein] + acetyl-CoA = N(6)-biotinyl-L-lysyl-[protein] + malonyl-CoA</text>
        <dbReference type="Rhea" id="RHEA:54728"/>
        <dbReference type="Rhea" id="RHEA-COMP:10505"/>
        <dbReference type="Rhea" id="RHEA-COMP:10506"/>
        <dbReference type="ChEBI" id="CHEBI:57288"/>
        <dbReference type="ChEBI" id="CHEBI:57384"/>
        <dbReference type="ChEBI" id="CHEBI:83144"/>
        <dbReference type="ChEBI" id="CHEBI:83145"/>
        <dbReference type="EC" id="2.1.3.15"/>
    </reaction>
</comment>
<comment type="cofactor">
    <cofactor evidence="1">
        <name>Zn(2+)</name>
        <dbReference type="ChEBI" id="CHEBI:29105"/>
    </cofactor>
    <text evidence="1">Binds 1 zinc ion per subunit.</text>
</comment>
<comment type="pathway">
    <text evidence="1">Lipid metabolism; malonyl-CoA biosynthesis; malonyl-CoA from acetyl-CoA: step 1/1.</text>
</comment>
<comment type="subunit">
    <text evidence="1">Acetyl-CoA carboxylase is a heterohexamer composed of biotin carboxyl carrier protein (AccB), biotin carboxylase (AccC) and two subunits each of ACCase subunit alpha (AccA) and ACCase subunit beta (AccD).</text>
</comment>
<comment type="subcellular location">
    <subcellularLocation>
        <location evidence="1">Cytoplasm</location>
    </subcellularLocation>
</comment>
<comment type="similarity">
    <text evidence="1">Belongs to the AccD/PCCB family.</text>
</comment>
<proteinExistence type="inferred from homology"/>
<accession>B1H0E3</accession>
<feature type="chain" id="PRO_0000389897" description="Acetyl-coenzyme A carboxylase carboxyl transferase subunit beta">
    <location>
        <begin position="1"/>
        <end position="274"/>
    </location>
</feature>
<feature type="domain" description="CoA carboxyltransferase N-terminal" evidence="2">
    <location>
        <begin position="18"/>
        <end position="274"/>
    </location>
</feature>
<feature type="zinc finger region" description="C4-type" evidence="1">
    <location>
        <begin position="22"/>
        <end position="44"/>
    </location>
</feature>
<feature type="binding site" evidence="1">
    <location>
        <position position="22"/>
    </location>
    <ligand>
        <name>Zn(2+)</name>
        <dbReference type="ChEBI" id="CHEBI:29105"/>
    </ligand>
</feature>
<feature type="binding site" evidence="1">
    <location>
        <position position="25"/>
    </location>
    <ligand>
        <name>Zn(2+)</name>
        <dbReference type="ChEBI" id="CHEBI:29105"/>
    </ligand>
</feature>
<feature type="binding site" evidence="1">
    <location>
        <position position="41"/>
    </location>
    <ligand>
        <name>Zn(2+)</name>
        <dbReference type="ChEBI" id="CHEBI:29105"/>
    </ligand>
</feature>
<feature type="binding site" evidence="1">
    <location>
        <position position="44"/>
    </location>
    <ligand>
        <name>Zn(2+)</name>
        <dbReference type="ChEBI" id="CHEBI:29105"/>
    </ligand>
</feature>
<name>ACCD_ENDTX</name>
<reference key="1">
    <citation type="journal article" date="2008" name="Proc. Natl. Acad. Sci. U.S.A.">
        <title>Complete genome of the uncultured termite group 1 bacteria in a single host protist cell.</title>
        <authorList>
            <person name="Hongoh Y."/>
            <person name="Sharma V.K."/>
            <person name="Prakash T."/>
            <person name="Noda S."/>
            <person name="Taylor T.D."/>
            <person name="Kudo T."/>
            <person name="Sakaki Y."/>
            <person name="Toyoda A."/>
            <person name="Hattori M."/>
            <person name="Ohkuma M."/>
        </authorList>
    </citation>
    <scope>NUCLEOTIDE SEQUENCE [LARGE SCALE GENOMIC DNA]</scope>
</reference>
<evidence type="ECO:0000255" key="1">
    <source>
        <dbReference type="HAMAP-Rule" id="MF_01395"/>
    </source>
</evidence>
<evidence type="ECO:0000255" key="2">
    <source>
        <dbReference type="PROSITE-ProRule" id="PRU01136"/>
    </source>
</evidence>